<evidence type="ECO:0000255" key="1">
    <source>
        <dbReference type="PROSITE-ProRule" id="PRU00434"/>
    </source>
</evidence>
<evidence type="ECO:0000269" key="2">
    <source>
    </source>
</evidence>
<evidence type="ECO:0000305" key="3"/>
<gene>
    <name type="primary">phnT</name>
    <name type="ordered locus">STM0428</name>
</gene>
<protein>
    <recommendedName>
        <fullName>Putative 2-aminoethylphosphonate import ATP-binding protein PhnT</fullName>
    </recommendedName>
</protein>
<name>PHNT_SALTY</name>
<comment type="function">
    <text>Probably part of the PhnSTUV complex (TC 3.A.1.11.5) involved in 2-aminoethylphosphonate import. Probably responsible for energy coupling to the transport system.</text>
</comment>
<comment type="subcellular location">
    <subcellularLocation>
        <location evidence="3">Cell inner membrane</location>
        <topology evidence="3">Peripheral membrane protein</topology>
    </subcellularLocation>
</comment>
<comment type="induction">
    <text evidence="2">Induced when inorganic phosphate is limiting; this is controlled by PhoB.</text>
</comment>
<comment type="miscellaneous">
    <text>Maps to a phosphate-starvation-inducible locus previously known as psiC.</text>
</comment>
<comment type="similarity">
    <text evidence="3">Belongs to the ABC transporter superfamily. 2-aminoethylphosphonate importer (TC 3.A.1.11.5) family.</text>
</comment>
<sequence length="369" mass="40082">MLMKTTTVHAPASQGTSGIVLDSLRVAYHGNVVLKPLSLTIEPGEVLALIGPSGSGKTTVLRAVAGFVQPAGGRILIGDTDVTHLPPYKRGLAMVVQNYALFPHLKVEDNVAFGLRAQKQPKALINERVTQALKTVGMSDYAARYPHQLSGGQQQRVAIARAIAVRPRVLLLDEPLSALDAQIRHNMVEEIARLHRELPELTILYVTHDQTEALTLADKIGIMKDGSLIAHGETRALYQHPPNRFAAEFLGRANILSAIALGITEAPGLVDVSCGGAVIRAFSRGSHHGYNKLLCIRPQHLSLTPRSAYSNRFNATLQSVHWQGDLTHLLCDVAGETVRMVLTHVNPLPRVGDKLALWFEPDDAVLIEV</sequence>
<feature type="chain" id="PRO_0000286742" description="Putative 2-aminoethylphosphonate import ATP-binding protein PhnT">
    <location>
        <begin position="1"/>
        <end position="369"/>
    </location>
</feature>
<feature type="domain" description="ABC transporter" evidence="1">
    <location>
        <begin position="19"/>
        <end position="250"/>
    </location>
</feature>
<feature type="binding site" evidence="1">
    <location>
        <begin position="51"/>
        <end position="58"/>
    </location>
    <ligand>
        <name>ATP</name>
        <dbReference type="ChEBI" id="CHEBI:30616"/>
    </ligand>
</feature>
<dbReference type="EMBL" id="U69493">
    <property type="protein sequence ID" value="AAB39645.1"/>
    <property type="molecule type" value="Genomic_DNA"/>
</dbReference>
<dbReference type="EMBL" id="AE006468">
    <property type="protein sequence ID" value="AAL19382.1"/>
    <property type="molecule type" value="Genomic_DNA"/>
</dbReference>
<dbReference type="PIR" id="T46950">
    <property type="entry name" value="T46950"/>
</dbReference>
<dbReference type="RefSeq" id="NP_459423.1">
    <property type="nucleotide sequence ID" value="NC_003197.2"/>
</dbReference>
<dbReference type="RefSeq" id="WP_000928801.1">
    <property type="nucleotide sequence ID" value="NC_003197.2"/>
</dbReference>
<dbReference type="SMR" id="P96063"/>
<dbReference type="STRING" id="99287.STM0428"/>
<dbReference type="TCDB" id="3.A.1.11.5">
    <property type="family name" value="the atp-binding cassette (abc) superfamily"/>
</dbReference>
<dbReference type="PaxDb" id="99287-STM0428"/>
<dbReference type="GeneID" id="1251947"/>
<dbReference type="KEGG" id="stm:STM0428"/>
<dbReference type="PATRIC" id="fig|99287.12.peg.457"/>
<dbReference type="HOGENOM" id="CLU_000604_1_1_6"/>
<dbReference type="OMA" id="HITAIHV"/>
<dbReference type="PhylomeDB" id="P96063"/>
<dbReference type="BioCyc" id="SENT99287:STM0428-MONOMER"/>
<dbReference type="Proteomes" id="UP000001014">
    <property type="component" value="Chromosome"/>
</dbReference>
<dbReference type="GO" id="GO:0043190">
    <property type="term" value="C:ATP-binding cassette (ABC) transporter complex"/>
    <property type="evidence" value="ECO:0007669"/>
    <property type="project" value="InterPro"/>
</dbReference>
<dbReference type="GO" id="GO:0005524">
    <property type="term" value="F:ATP binding"/>
    <property type="evidence" value="ECO:0007669"/>
    <property type="project" value="UniProtKB-KW"/>
</dbReference>
<dbReference type="GO" id="GO:0016887">
    <property type="term" value="F:ATP hydrolysis activity"/>
    <property type="evidence" value="ECO:0007669"/>
    <property type="project" value="InterPro"/>
</dbReference>
<dbReference type="GO" id="GO:0022857">
    <property type="term" value="F:transmembrane transporter activity"/>
    <property type="evidence" value="ECO:0007669"/>
    <property type="project" value="InterPro"/>
</dbReference>
<dbReference type="FunFam" id="3.40.50.300:FF:000425">
    <property type="entry name" value="Probable ABC transporter, ATP-binding subunit"/>
    <property type="match status" value="1"/>
</dbReference>
<dbReference type="Gene3D" id="2.40.50.100">
    <property type="match status" value="1"/>
</dbReference>
<dbReference type="Gene3D" id="3.40.50.300">
    <property type="entry name" value="P-loop containing nucleotide triphosphate hydrolases"/>
    <property type="match status" value="1"/>
</dbReference>
<dbReference type="InterPro" id="IPR003593">
    <property type="entry name" value="AAA+_ATPase"/>
</dbReference>
<dbReference type="InterPro" id="IPR050093">
    <property type="entry name" value="ABC_SmlMolc_Importer"/>
</dbReference>
<dbReference type="InterPro" id="IPR003439">
    <property type="entry name" value="ABC_transporter-like_ATP-bd"/>
</dbReference>
<dbReference type="InterPro" id="IPR017871">
    <property type="entry name" value="ABC_transporter-like_CS"/>
</dbReference>
<dbReference type="InterPro" id="IPR017662">
    <property type="entry name" value="AminoethylPonate_ABC_PhnT"/>
</dbReference>
<dbReference type="InterPro" id="IPR008995">
    <property type="entry name" value="Mo/tungstate-bd_C_term_dom"/>
</dbReference>
<dbReference type="InterPro" id="IPR027417">
    <property type="entry name" value="P-loop_NTPase"/>
</dbReference>
<dbReference type="InterPro" id="IPR013611">
    <property type="entry name" value="Transp-assoc_OB_typ2"/>
</dbReference>
<dbReference type="NCBIfam" id="TIGR03258">
    <property type="entry name" value="PhnT"/>
    <property type="match status" value="1"/>
</dbReference>
<dbReference type="PANTHER" id="PTHR42781">
    <property type="entry name" value="SPERMIDINE/PUTRESCINE IMPORT ATP-BINDING PROTEIN POTA"/>
    <property type="match status" value="1"/>
</dbReference>
<dbReference type="PANTHER" id="PTHR42781:SF4">
    <property type="entry name" value="SPERMIDINE_PUTRESCINE IMPORT ATP-BINDING PROTEIN POTA"/>
    <property type="match status" value="1"/>
</dbReference>
<dbReference type="Pfam" id="PF00005">
    <property type="entry name" value="ABC_tran"/>
    <property type="match status" value="1"/>
</dbReference>
<dbReference type="Pfam" id="PF08402">
    <property type="entry name" value="TOBE_2"/>
    <property type="match status" value="1"/>
</dbReference>
<dbReference type="SMART" id="SM00382">
    <property type="entry name" value="AAA"/>
    <property type="match status" value="1"/>
</dbReference>
<dbReference type="SUPFAM" id="SSF50331">
    <property type="entry name" value="MOP-like"/>
    <property type="match status" value="1"/>
</dbReference>
<dbReference type="SUPFAM" id="SSF52540">
    <property type="entry name" value="P-loop containing nucleoside triphosphate hydrolases"/>
    <property type="match status" value="1"/>
</dbReference>
<dbReference type="PROSITE" id="PS00211">
    <property type="entry name" value="ABC_TRANSPORTER_1"/>
    <property type="match status" value="1"/>
</dbReference>
<dbReference type="PROSITE" id="PS50893">
    <property type="entry name" value="ABC_TRANSPORTER_2"/>
    <property type="match status" value="1"/>
</dbReference>
<keyword id="KW-0067">ATP-binding</keyword>
<keyword id="KW-0997">Cell inner membrane</keyword>
<keyword id="KW-1003">Cell membrane</keyword>
<keyword id="KW-0472">Membrane</keyword>
<keyword id="KW-0547">Nucleotide-binding</keyword>
<keyword id="KW-1185">Reference proteome</keyword>
<keyword id="KW-0813">Transport</keyword>
<organism>
    <name type="scientific">Salmonella typhimurium (strain LT2 / SGSC1412 / ATCC 700720)</name>
    <dbReference type="NCBI Taxonomy" id="99287"/>
    <lineage>
        <taxon>Bacteria</taxon>
        <taxon>Pseudomonadati</taxon>
        <taxon>Pseudomonadota</taxon>
        <taxon>Gammaproteobacteria</taxon>
        <taxon>Enterobacterales</taxon>
        <taxon>Enterobacteriaceae</taxon>
        <taxon>Salmonella</taxon>
    </lineage>
</organism>
<reference key="1">
    <citation type="submission" date="1996-09" db="EMBL/GenBank/DDBJ databases">
        <title>Molecular genetic analysis of the Salmonella typhimurium LT2 phnXWRSTUV locus required for 2-aminoethylphosphonate transport and metabolism.</title>
        <authorList>
            <person name="Metcalf W.W."/>
            <person name="Jiang W."/>
            <person name="Wanner B.L."/>
        </authorList>
    </citation>
    <scope>NUCLEOTIDE SEQUENCE [GENOMIC DNA]</scope>
    <source>
        <strain>LT2</strain>
    </source>
</reference>
<reference key="2">
    <citation type="journal article" date="2001" name="Nature">
        <title>Complete genome sequence of Salmonella enterica serovar Typhimurium LT2.</title>
        <authorList>
            <person name="McClelland M."/>
            <person name="Sanderson K.E."/>
            <person name="Spieth J."/>
            <person name="Clifton S.W."/>
            <person name="Latreille P."/>
            <person name="Courtney L."/>
            <person name="Porwollik S."/>
            <person name="Ali J."/>
            <person name="Dante M."/>
            <person name="Du F."/>
            <person name="Hou S."/>
            <person name="Layman D."/>
            <person name="Leonard S."/>
            <person name="Nguyen C."/>
            <person name="Scott K."/>
            <person name="Holmes A."/>
            <person name="Grewal N."/>
            <person name="Mulvaney E."/>
            <person name="Ryan E."/>
            <person name="Sun H."/>
            <person name="Florea L."/>
            <person name="Miller W."/>
            <person name="Stoneking T."/>
            <person name="Nhan M."/>
            <person name="Waterston R."/>
            <person name="Wilson R.K."/>
        </authorList>
    </citation>
    <scope>NUCLEOTIDE SEQUENCE [LARGE SCALE GENOMIC DNA]</scope>
    <source>
        <strain>LT2 / SGSC1412 / ATCC 700720</strain>
    </source>
</reference>
<reference key="3">
    <citation type="journal article" date="1995" name="J. Bacteriol.">
        <title>Molecular cloning, mapping, and regulation of Pho regulon genes for phosphonate breakdown by the phosphonatase pathway of Salmonella typhimurium LT2.</title>
        <authorList>
            <person name="Jiang W."/>
            <person name="Metcalf W.W."/>
            <person name="Lee K.-S."/>
            <person name="Wanner B.L."/>
        </authorList>
    </citation>
    <scope>CLONING</scope>
    <scope>INDUCTION</scope>
    <source>
        <strain>LT2</strain>
    </source>
</reference>
<proteinExistence type="evidence at transcript level"/>
<accession>P96063</accession>
<accession>Q7CR32</accession>